<proteinExistence type="inferred from homology"/>
<comment type="similarity">
    <text evidence="1">Belongs to the UPF0246 family.</text>
</comment>
<dbReference type="EMBL" id="AE016853">
    <property type="protein sequence ID" value="AAO54769.1"/>
    <property type="molecule type" value="Genomic_DNA"/>
</dbReference>
<dbReference type="RefSeq" id="NP_791074.1">
    <property type="nucleotide sequence ID" value="NC_004578.1"/>
</dbReference>
<dbReference type="SMR" id="Q887P7"/>
<dbReference type="STRING" id="223283.PSPTO_1244"/>
<dbReference type="GeneID" id="1182880"/>
<dbReference type="KEGG" id="pst:PSPTO_1244"/>
<dbReference type="PATRIC" id="fig|223283.9.peg.1265"/>
<dbReference type="eggNOG" id="COG3022">
    <property type="taxonomic scope" value="Bacteria"/>
</dbReference>
<dbReference type="HOGENOM" id="CLU_061989_0_0_6"/>
<dbReference type="OrthoDB" id="9777133at2"/>
<dbReference type="PhylomeDB" id="Q887P7"/>
<dbReference type="Proteomes" id="UP000002515">
    <property type="component" value="Chromosome"/>
</dbReference>
<dbReference type="GO" id="GO:0005829">
    <property type="term" value="C:cytosol"/>
    <property type="evidence" value="ECO:0007669"/>
    <property type="project" value="TreeGrafter"/>
</dbReference>
<dbReference type="GO" id="GO:0033194">
    <property type="term" value="P:response to hydroperoxide"/>
    <property type="evidence" value="ECO:0007669"/>
    <property type="project" value="TreeGrafter"/>
</dbReference>
<dbReference type="HAMAP" id="MF_00652">
    <property type="entry name" value="UPF0246"/>
    <property type="match status" value="1"/>
</dbReference>
<dbReference type="InterPro" id="IPR005583">
    <property type="entry name" value="YaaA"/>
</dbReference>
<dbReference type="NCBIfam" id="NF002541">
    <property type="entry name" value="PRK02101.1-1"/>
    <property type="match status" value="1"/>
</dbReference>
<dbReference type="NCBIfam" id="NF002542">
    <property type="entry name" value="PRK02101.1-3"/>
    <property type="match status" value="1"/>
</dbReference>
<dbReference type="PANTHER" id="PTHR30283:SF4">
    <property type="entry name" value="PEROXIDE STRESS RESISTANCE PROTEIN YAAA"/>
    <property type="match status" value="1"/>
</dbReference>
<dbReference type="PANTHER" id="PTHR30283">
    <property type="entry name" value="PEROXIDE STRESS RESPONSE PROTEIN YAAA"/>
    <property type="match status" value="1"/>
</dbReference>
<dbReference type="Pfam" id="PF03883">
    <property type="entry name" value="H2O2_YaaD"/>
    <property type="match status" value="1"/>
</dbReference>
<accession>Q887P7</accession>
<reference key="1">
    <citation type="journal article" date="2003" name="Proc. Natl. Acad. Sci. U.S.A.">
        <title>The complete genome sequence of the Arabidopsis and tomato pathogen Pseudomonas syringae pv. tomato DC3000.</title>
        <authorList>
            <person name="Buell C.R."/>
            <person name="Joardar V."/>
            <person name="Lindeberg M."/>
            <person name="Selengut J."/>
            <person name="Paulsen I.T."/>
            <person name="Gwinn M.L."/>
            <person name="Dodson R.J."/>
            <person name="DeBoy R.T."/>
            <person name="Durkin A.S."/>
            <person name="Kolonay J.F."/>
            <person name="Madupu R."/>
            <person name="Daugherty S.C."/>
            <person name="Brinkac L.M."/>
            <person name="Beanan M.J."/>
            <person name="Haft D.H."/>
            <person name="Nelson W.C."/>
            <person name="Davidsen T.M."/>
            <person name="Zafar N."/>
            <person name="Zhou L."/>
            <person name="Liu J."/>
            <person name="Yuan Q."/>
            <person name="Khouri H.M."/>
            <person name="Fedorova N.B."/>
            <person name="Tran B."/>
            <person name="Russell D."/>
            <person name="Berry K.J."/>
            <person name="Utterback T.R."/>
            <person name="Van Aken S.E."/>
            <person name="Feldblyum T.V."/>
            <person name="D'Ascenzo M."/>
            <person name="Deng W.-L."/>
            <person name="Ramos A.R."/>
            <person name="Alfano J.R."/>
            <person name="Cartinhour S."/>
            <person name="Chatterjee A.K."/>
            <person name="Delaney T.P."/>
            <person name="Lazarowitz S.G."/>
            <person name="Martin G.B."/>
            <person name="Schneider D.J."/>
            <person name="Tang X."/>
            <person name="Bender C.L."/>
            <person name="White O."/>
            <person name="Fraser C.M."/>
            <person name="Collmer A."/>
        </authorList>
    </citation>
    <scope>NUCLEOTIDE SEQUENCE [LARGE SCALE GENOMIC DNA]</scope>
    <source>
        <strain>ATCC BAA-871 / DC3000</strain>
    </source>
</reference>
<evidence type="ECO:0000255" key="1">
    <source>
        <dbReference type="HAMAP-Rule" id="MF_00652"/>
    </source>
</evidence>
<gene>
    <name type="ordered locus">PSPTO_1244</name>
</gene>
<keyword id="KW-1185">Reference proteome</keyword>
<name>Y1244_PSESM</name>
<organism>
    <name type="scientific">Pseudomonas syringae pv. tomato (strain ATCC BAA-871 / DC3000)</name>
    <dbReference type="NCBI Taxonomy" id="223283"/>
    <lineage>
        <taxon>Bacteria</taxon>
        <taxon>Pseudomonadati</taxon>
        <taxon>Pseudomonadota</taxon>
        <taxon>Gammaproteobacteria</taxon>
        <taxon>Pseudomonadales</taxon>
        <taxon>Pseudomonadaceae</taxon>
        <taxon>Pseudomonas</taxon>
    </lineage>
</organism>
<feature type="chain" id="PRO_0000203997" description="UPF0246 protein PSPTO_1244">
    <location>
        <begin position="1"/>
        <end position="259"/>
    </location>
</feature>
<sequence length="259" mass="29473">MLMVISPAKTLDFETPPTTARFTRPQYLDHSQELITQLRELTPAQISELMHLSDKLAGLNAARFGSWDPAFTLDNAKQALLAFKGDVYTGLQAETLSDAQLDYAQDHLRMLSGLYGLLRPLDLMQPYRLEMGTRLANARGKDLYAFWGTRISEWLNEALADQGDDLLLNLASTEYFSAVKRSALKARIIDTEFKDLKNGHYKIISFYAKKARGMMSRFVIEERINSPEALKQFDVQGYRYNSEQSTPDKLVFLRNSAED</sequence>
<protein>
    <recommendedName>
        <fullName evidence="1">UPF0246 protein PSPTO_1244</fullName>
    </recommendedName>
</protein>